<protein>
    <recommendedName>
        <fullName>Protein M2-1</fullName>
    </recommendedName>
    <alternativeName>
        <fullName>Envelope-associated 22 kDa protein</fullName>
    </alternativeName>
    <alternativeName>
        <fullName>Transcription antitermination factor M2-1</fullName>
    </alternativeName>
</protein>
<reference key="1">
    <citation type="journal article" date="1992" name="J. Gen. Virol.">
        <title>Sequence analysis of M2 mRNA of bovine respiratory syncytial virus obtained from an F-M2 dicistronic mRNA suggests structural homology with that of human respiratory syncytial virus.</title>
        <authorList>
            <person name="Zamora M."/>
            <person name="Samal S.K."/>
        </authorList>
    </citation>
    <scope>NUCLEOTIDE SEQUENCE [MRNA]</scope>
</reference>
<reference key="2">
    <citation type="journal article" date="2001" name="Virus Genes">
        <title>Rescue of bovine respiratory syncytial virus from cloned cDNA: entire genome sequence of BRSV strain A51908.</title>
        <authorList>
            <person name="Yunus A.S."/>
            <person name="Khattar S.K."/>
            <person name="Collins P.L."/>
            <person name="Samal S.K."/>
        </authorList>
    </citation>
    <scope>NUCLEOTIDE SEQUENCE [GENOMIC RNA]</scope>
    <source>
        <strain>A51908</strain>
        <strain>ATCC 51908</strain>
    </source>
</reference>
<feature type="chain" id="PRO_0000142838" description="Protein M2-1">
    <location>
        <begin position="1"/>
        <end position="186"/>
    </location>
</feature>
<feature type="zinc finger region" description="C3H1-type" evidence="1 2">
    <location>
        <begin position="1"/>
        <end position="28"/>
    </location>
</feature>
<feature type="region of interest" description="Oligomerization" evidence="1">
    <location>
        <begin position="32"/>
        <end position="49"/>
    </location>
</feature>
<feature type="region of interest" description="Globular core" evidence="1">
    <location>
        <begin position="76"/>
        <end position="171"/>
    </location>
</feature>
<feature type="region of interest" description="Binding to the phosphoprotein" evidence="1">
    <location>
        <begin position="126"/>
        <end position="163"/>
    </location>
</feature>
<feature type="site" description="Involved in RNA-binding" evidence="1">
    <location>
        <position position="8"/>
    </location>
</feature>
<feature type="site" description="Involved in RNA-binding" evidence="1">
    <location>
        <position position="23"/>
    </location>
</feature>
<feature type="site" description="Involved in RNA-binding" evidence="1">
    <location>
        <position position="92"/>
    </location>
</feature>
<feature type="site" description="Involved in RNA-binding" evidence="1">
    <location>
        <position position="151"/>
    </location>
</feature>
<feature type="modified residue" description="Phosphoserine; by host" evidence="1">
    <location>
        <position position="58"/>
    </location>
</feature>
<feature type="modified residue" description="Phosphoserine; by host" evidence="1">
    <location>
        <position position="61"/>
    </location>
</feature>
<feature type="sequence variant" description="In strain: ATCC 51908.">
    <original>S</original>
    <variation>G</variation>
    <location>
        <position position="85"/>
    </location>
</feature>
<feature type="sequence variant" description="In strain: ATCC 51908.">
    <original>NVD</original>
    <variation>IVN</variation>
    <location>
        <begin position="180"/>
        <end position="182"/>
    </location>
</feature>
<keyword id="KW-1035">Host cytoplasm</keyword>
<keyword id="KW-1048">Host nucleus</keyword>
<keyword id="KW-0479">Metal-binding</keyword>
<keyword id="KW-0597">Phosphoprotein</keyword>
<keyword id="KW-1185">Reference proteome</keyword>
<keyword id="KW-0694">RNA-binding</keyword>
<keyword id="KW-0804">Transcription</keyword>
<keyword id="KW-0889">Transcription antitermination</keyword>
<keyword id="KW-0805">Transcription regulation</keyword>
<keyword id="KW-1195">Viral transcription</keyword>
<keyword id="KW-0946">Virion</keyword>
<keyword id="KW-0862">Zinc</keyword>
<keyword id="KW-0863">Zinc-finger</keyword>
<proteinExistence type="evidence at transcript level"/>
<organismHost>
    <name type="scientific">Bos taurus</name>
    <name type="common">Bovine</name>
    <dbReference type="NCBI Taxonomy" id="9913"/>
</organismHost>
<accession>P29792</accession>
<accession>Q77KY9</accession>
<accession>Q77KZ7</accession>
<comment type="function">
    <text evidence="1">Acts as a tetrameric transcription processivity factor that binds in a competitive manner to RNA and the phosphoprotein (P) to prevent premature termination during transcription. Transcription anti-terminator that enhances readthrough of intergenic junctions during viral transcription. Preferentially binds to poly(A)-rich sequences. Plays a role in the association of the matrix protein with the nucleocapsid, which initiates assembly and budding.</text>
</comment>
<comment type="subunit">
    <text evidence="1">Homotetramer. The homotetramer interacts with RNA. Interacts with the phosphoprotein (P); this interaction is required for protein M2-1 function, localization in host inclusion bodies. Formation of a complex host PP1/M2-1/P allows P to target host PP1 phosphatase to the M2-1 substrate. Interacts with the nucleoprotein (N). Interacts with the matrix protein (M); this interaction directs M localization to cytoplasmic inclusions comprising viral proteins L, N, P, and M2-1 and mediates M association with the nucleocapsid. Interacts with host PABPC1 (via C-terminus).</text>
</comment>
<comment type="subcellular location">
    <subcellularLocation>
        <location evidence="1">Virion</location>
    </subcellularLocation>
    <subcellularLocation>
        <location evidence="1">Host cytoplasm</location>
    </subcellularLocation>
    <subcellularLocation>
        <location evidence="1">Host nucleus</location>
    </subcellularLocation>
    <text evidence="1">Localizes in cytoplasmic inclusion bodies substructures called inclusion bodies associated granules (IBAGs). Forms a layer between the matrix and nucleocapsid.</text>
</comment>
<comment type="domain">
    <text evidence="1">Contains a zinc-finger domain on its N-terminus essential for its anti-termination function. Contains an oligomerization domain. The central globular core is responsible for binding to RNA and phosphoprotein.</text>
</comment>
<comment type="PTM">
    <text evidence="1">Phosphorylated by host in infected cells. Only dephosphorylated M2-1 is competent for viral mRNA binding. Cyclic turnover of phosphorylation-dephosphorylation of M2-1 is required for efficient viral transcription.</text>
</comment>
<comment type="similarity">
    <text evidence="3">Belongs to the pneumoviridae M2-1 protein family.</text>
</comment>
<dbReference type="EMBL" id="M82816">
    <property type="protein sequence ID" value="AAA42805.1"/>
    <property type="molecule type" value="mRNA"/>
</dbReference>
<dbReference type="EMBL" id="AF295543">
    <property type="protein sequence ID" value="AAL49400.1"/>
    <property type="molecule type" value="Genomic_RNA"/>
</dbReference>
<dbReference type="EMBL" id="AF295544">
    <property type="protein sequence ID" value="AAL49411.1"/>
    <property type="molecule type" value="Genomic_RNA"/>
</dbReference>
<dbReference type="PIR" id="JQ1482">
    <property type="entry name" value="WMNZBA"/>
</dbReference>
<dbReference type="SMR" id="P29792"/>
<dbReference type="DIP" id="DIP-1099N"/>
<dbReference type="Proteomes" id="UP000007616">
    <property type="component" value="Genome"/>
</dbReference>
<dbReference type="GO" id="GO:0030430">
    <property type="term" value="C:host cell cytoplasm"/>
    <property type="evidence" value="ECO:0007669"/>
    <property type="project" value="UniProtKB-SubCell"/>
</dbReference>
<dbReference type="GO" id="GO:0042025">
    <property type="term" value="C:host cell nucleus"/>
    <property type="evidence" value="ECO:0007669"/>
    <property type="project" value="UniProtKB-SubCell"/>
</dbReference>
<dbReference type="GO" id="GO:0044423">
    <property type="term" value="C:virion component"/>
    <property type="evidence" value="ECO:0007669"/>
    <property type="project" value="UniProtKB-KW"/>
</dbReference>
<dbReference type="GO" id="GO:0003723">
    <property type="term" value="F:RNA binding"/>
    <property type="evidence" value="ECO:0007669"/>
    <property type="project" value="UniProtKB-KW"/>
</dbReference>
<dbReference type="GO" id="GO:0005198">
    <property type="term" value="F:structural molecule activity"/>
    <property type="evidence" value="ECO:0007669"/>
    <property type="project" value="InterPro"/>
</dbReference>
<dbReference type="GO" id="GO:0008270">
    <property type="term" value="F:zinc ion binding"/>
    <property type="evidence" value="ECO:0007669"/>
    <property type="project" value="UniProtKB-KW"/>
</dbReference>
<dbReference type="GO" id="GO:0046782">
    <property type="term" value="P:regulation of viral transcription"/>
    <property type="evidence" value="ECO:0007669"/>
    <property type="project" value="InterPro"/>
</dbReference>
<dbReference type="GO" id="GO:0031564">
    <property type="term" value="P:transcription antitermination"/>
    <property type="evidence" value="ECO:0007669"/>
    <property type="project" value="UniProtKB-KW"/>
</dbReference>
<dbReference type="GO" id="GO:0019083">
    <property type="term" value="P:viral transcription"/>
    <property type="evidence" value="ECO:0007669"/>
    <property type="project" value="UniProtKB-KW"/>
</dbReference>
<dbReference type="Gene3D" id="1.20.120.1350">
    <property type="entry name" value="Pneumovirus matrix protein 2 (M2), zinc-binding domain"/>
    <property type="match status" value="1"/>
</dbReference>
<dbReference type="InterPro" id="IPR009452">
    <property type="entry name" value="Pneumovirus_M2-1"/>
</dbReference>
<dbReference type="InterPro" id="IPR000571">
    <property type="entry name" value="Znf_CCCH"/>
</dbReference>
<dbReference type="InterPro" id="IPR036855">
    <property type="entry name" value="Znf_CCCH_sf"/>
</dbReference>
<dbReference type="Pfam" id="PF06436">
    <property type="entry name" value="Pneumovirus_M2"/>
    <property type="match status" value="1"/>
</dbReference>
<dbReference type="PIRSF" id="PIRSF003913">
    <property type="entry name" value="Matrix_glycop-M2_paramyxo"/>
    <property type="match status" value="1"/>
</dbReference>
<dbReference type="SMART" id="SM00356">
    <property type="entry name" value="ZnF_C3H1"/>
    <property type="match status" value="1"/>
</dbReference>
<dbReference type="SUPFAM" id="SSF90229">
    <property type="entry name" value="CCCH zinc finger"/>
    <property type="match status" value="1"/>
</dbReference>
<dbReference type="PROSITE" id="PS50103">
    <property type="entry name" value="ZF_C3H1"/>
    <property type="match status" value="1"/>
</dbReference>
<evidence type="ECO:0000250" key="1">
    <source>
        <dbReference type="UniProtKB" id="P04545"/>
    </source>
</evidence>
<evidence type="ECO:0000255" key="2">
    <source>
        <dbReference type="PROSITE-ProRule" id="PRU00723"/>
    </source>
</evidence>
<evidence type="ECO:0000305" key="3"/>
<organism>
    <name type="scientific">Bovine respiratory syncytial virus (strain A51908)</name>
    <name type="common">BRS</name>
    <dbReference type="NCBI Taxonomy" id="11247"/>
    <lineage>
        <taxon>Viruses</taxon>
        <taxon>Riboviria</taxon>
        <taxon>Orthornavirae</taxon>
        <taxon>Negarnaviricota</taxon>
        <taxon>Haploviricotina</taxon>
        <taxon>Monjiviricetes</taxon>
        <taxon>Mononegavirales</taxon>
        <taxon>Pneumoviridae</taxon>
        <taxon>Orthopneumovirus</taxon>
        <taxon>Orthopneumovirus bovis</taxon>
        <taxon>bovine respiratory syncytial virus</taxon>
    </lineage>
</organism>
<gene>
    <name type="primary">M2-1</name>
</gene>
<name>M21_BRSVA</name>
<sequence>MSRRNPCKYEIRGHCLNGKKCHFSHNYFEWPPHALLVRQNFMLNKILKSMDRNNDTLSEISGAAELDRTEEYALGVIGVLESYLSSINNITKQSACVAMSKLLAEINNDDIKRLRNKEVPTSPKIRIYNTVISYIDSNKRNTKQTIHLLKRLPADVLKKTIKNTIDIHNEINGNNQGDINVDEQNE</sequence>